<proteinExistence type="inferred from homology"/>
<name>GGPS_PSEAG</name>
<reference key="1">
    <citation type="submission" date="2005-07" db="EMBL/GenBank/DDBJ databases">
        <title>Isolation and characterization of a glucosylglycerol-phosphate-synthase from heterotrophic bacteria.</title>
        <authorList>
            <person name="Hagemann M."/>
            <person name="Steinbruch R."/>
        </authorList>
    </citation>
    <scope>NUCLEOTIDE SEQUENCE [GENOMIC DNA]</scope>
    <source>
        <strain>OA146</strain>
    </source>
</reference>
<evidence type="ECO:0000250" key="1">
    <source>
        <dbReference type="UniProtKB" id="P74258"/>
    </source>
</evidence>
<evidence type="ECO:0000305" key="2"/>
<accession>Q93JY3</accession>
<sequence length="755" mass="84202">MLLATDLDGTFLGGDPKDRLSLYQTIAAHPEIRLAYVTGRSLESVLPLLADPTLPQPDFIISDVGASLVHGDSLQPIQPLQSAVDALWPGDSQVASAIERFALERQDVPQVRRCSYFCNPEQAANPELLTIAESLGCDLLYSAERYLDFLPKGVNKGSSLQALIDWLELDNDQVLTAGDTLNDLSMLSGQFKGVCVGASEPGLLQATRQYSLVFHAERAGCGGILEAFVHFGFLGKQGIAAEGKQVAEPGKADLMMVYHRLPYEEFRGADGKLQRRRPTSPNGIIPTLLSFFGDGRAGSWVAWAEHDENSGETFDSHTTVDAERYPKLTAARVALSKEEVDIFYKRFSKEAFWPTLHTFWERGQFREDDWQVFLKVNRAFAERTALEAAEGATVWLHDYNLWMVPGYLRELRPDLRIAFFHHTYFPSADVFNVLPWRRQIIGSLLQCDYIGFHIPRQVENFVDAARGVMPLQTVSRQNCAPRFITYGCAVGLERMTTAVDTGNRVVKLGAHPVGLDIERVRSALAAPKIREMMERLRSELAGVKLILSVERLDYTKGILEKLNAYERLLEENPELLGKVTLVTVCVPAAKEMTIYDELQGQIEQAVGRINGRFARIGWTPLQFFFRSLPFEEVSAWYAMADVMWITPLRDGLNLVAKEFVAAQGLLDGRGVLVLSEFAGAAAELKGALLTNPHDPVDMTQTCYVALNMPKAEAQARLRELFDIVNYNDIRRWGDEFLAAVSDPQEQLDRALGLVG</sequence>
<keyword id="KW-0328">Glycosyltransferase</keyword>
<keyword id="KW-0808">Transferase</keyword>
<protein>
    <recommendedName>
        <fullName>Glucosylglycerol-phosphate synthase</fullName>
        <ecNumber>2.4.1.213</ecNumber>
    </recommendedName>
    <alternativeName>
        <fullName>Glucosyl-glycerol-phosphate synthase</fullName>
        <shortName>GG-phosphate synthase</shortName>
        <shortName>GGPS</shortName>
    </alternativeName>
</protein>
<gene>
    <name type="primary">ggpS</name>
</gene>
<feature type="chain" id="PRO_0000122504" description="Glucosylglycerol-phosphate synthase">
    <location>
        <begin position="1"/>
        <end position="755"/>
    </location>
</feature>
<organism>
    <name type="scientific">Pseudomonas anguilliseptica</name>
    <dbReference type="NCBI Taxonomy" id="53406"/>
    <lineage>
        <taxon>Bacteria</taxon>
        <taxon>Pseudomonadati</taxon>
        <taxon>Pseudomonadota</taxon>
        <taxon>Gammaproteobacteria</taxon>
        <taxon>Pseudomonadales</taxon>
        <taxon>Pseudomonadaceae</taxon>
        <taxon>Pseudomonas</taxon>
    </lineage>
</organism>
<dbReference type="EC" id="2.4.1.213"/>
<dbReference type="EMBL" id="AJ318784">
    <property type="protein sequence ID" value="CAC50077.2"/>
    <property type="molecule type" value="Genomic_DNA"/>
</dbReference>
<dbReference type="SMR" id="Q93JY3"/>
<dbReference type="STRING" id="53406.SAMN05421553_4236"/>
<dbReference type="CAZy" id="GT20">
    <property type="family name" value="Glycosyltransferase Family 20"/>
</dbReference>
<dbReference type="UniPathway" id="UPA00795"/>
<dbReference type="GO" id="GO:0003825">
    <property type="term" value="F:alpha,alpha-trehalose-phosphate synthase (UDP-forming) activity"/>
    <property type="evidence" value="ECO:0007669"/>
    <property type="project" value="TreeGrafter"/>
</dbReference>
<dbReference type="GO" id="GO:0033828">
    <property type="term" value="F:glucosylglycerol-phosphate synthase activity"/>
    <property type="evidence" value="ECO:0007669"/>
    <property type="project" value="UniProtKB-EC"/>
</dbReference>
<dbReference type="GO" id="GO:0000287">
    <property type="term" value="F:magnesium ion binding"/>
    <property type="evidence" value="ECO:0007669"/>
    <property type="project" value="UniProtKB-ARBA"/>
</dbReference>
<dbReference type="GO" id="GO:0016791">
    <property type="term" value="F:phosphatase activity"/>
    <property type="evidence" value="ECO:0007669"/>
    <property type="project" value="UniProtKB-ARBA"/>
</dbReference>
<dbReference type="GO" id="GO:0051473">
    <property type="term" value="P:glucosylglycerol biosynthetic process"/>
    <property type="evidence" value="ECO:0007669"/>
    <property type="project" value="UniProtKB-UniPathway"/>
</dbReference>
<dbReference type="GO" id="GO:0005992">
    <property type="term" value="P:trehalose biosynthetic process"/>
    <property type="evidence" value="ECO:0007669"/>
    <property type="project" value="InterPro"/>
</dbReference>
<dbReference type="CDD" id="cd03788">
    <property type="entry name" value="GT20_TPS"/>
    <property type="match status" value="1"/>
</dbReference>
<dbReference type="Gene3D" id="3.90.1070.10">
    <property type="match status" value="1"/>
</dbReference>
<dbReference type="Gene3D" id="3.40.50.2000">
    <property type="entry name" value="Glycogen Phosphorylase B"/>
    <property type="match status" value="2"/>
</dbReference>
<dbReference type="Gene3D" id="3.40.50.1000">
    <property type="entry name" value="HAD superfamily/HAD-like"/>
    <property type="match status" value="1"/>
</dbReference>
<dbReference type="InterPro" id="IPR012764">
    <property type="entry name" value="Gluc_glyc_Psyn"/>
</dbReference>
<dbReference type="InterPro" id="IPR001830">
    <property type="entry name" value="Glyco_trans_20"/>
</dbReference>
<dbReference type="InterPro" id="IPR036412">
    <property type="entry name" value="HAD-like_sf"/>
</dbReference>
<dbReference type="InterPro" id="IPR006379">
    <property type="entry name" value="HAD-SF_hydro_IIB"/>
</dbReference>
<dbReference type="InterPro" id="IPR023214">
    <property type="entry name" value="HAD_sf"/>
</dbReference>
<dbReference type="InterPro" id="IPR006380">
    <property type="entry name" value="SPP-like_dom"/>
</dbReference>
<dbReference type="NCBIfam" id="TIGR02398">
    <property type="entry name" value="gluc_glyc_Psyn"/>
    <property type="match status" value="1"/>
</dbReference>
<dbReference type="NCBIfam" id="TIGR01484">
    <property type="entry name" value="HAD-SF-IIB"/>
    <property type="match status" value="1"/>
</dbReference>
<dbReference type="PANTHER" id="PTHR10788:SF106">
    <property type="entry name" value="BCDNA.GH08860"/>
    <property type="match status" value="1"/>
</dbReference>
<dbReference type="PANTHER" id="PTHR10788">
    <property type="entry name" value="TREHALOSE-6-PHOSPHATE SYNTHASE"/>
    <property type="match status" value="1"/>
</dbReference>
<dbReference type="Pfam" id="PF00982">
    <property type="entry name" value="Glyco_transf_20"/>
    <property type="match status" value="1"/>
</dbReference>
<dbReference type="Pfam" id="PF05116">
    <property type="entry name" value="S6PP"/>
    <property type="match status" value="1"/>
</dbReference>
<dbReference type="SFLD" id="SFLDG01141">
    <property type="entry name" value="C2.B.1:_Sucrose_Phosphatase_Li"/>
    <property type="match status" value="1"/>
</dbReference>
<dbReference type="SFLD" id="SFLDS00003">
    <property type="entry name" value="Haloacid_Dehalogenase"/>
    <property type="match status" value="1"/>
</dbReference>
<dbReference type="SUPFAM" id="SSF56784">
    <property type="entry name" value="HAD-like"/>
    <property type="match status" value="1"/>
</dbReference>
<dbReference type="SUPFAM" id="SSF53756">
    <property type="entry name" value="UDP-Glycosyltransferase/glycogen phosphorylase"/>
    <property type="match status" value="1"/>
</dbReference>
<comment type="function">
    <text evidence="1">Involved in salt tolerance by producing GG-phosphate from ADP-glucose and glycerol-3-phosphate (G3P), an intermediate in the synthesis of the osmolyte glucosylglycerol (GG).</text>
</comment>
<comment type="catalytic activity">
    <reaction evidence="1">
        <text>ADP-alpha-D-glucose + sn-glycerol 3-phosphate = 2-O-(alpha-D-glucopyranosyl)-sn-glycerol 3-phosphate + ADP + H(+)</text>
        <dbReference type="Rhea" id="RHEA:12881"/>
        <dbReference type="ChEBI" id="CHEBI:15378"/>
        <dbReference type="ChEBI" id="CHEBI:57498"/>
        <dbReference type="ChEBI" id="CHEBI:57597"/>
        <dbReference type="ChEBI" id="CHEBI:87089"/>
        <dbReference type="ChEBI" id="CHEBI:456216"/>
        <dbReference type="EC" id="2.4.1.213"/>
    </reaction>
</comment>
<comment type="pathway">
    <text>Glycan metabolism; glucosylglycerol biosynthesis.</text>
</comment>
<comment type="similarity">
    <text evidence="2">Belongs to the glycosyltransferase 20 family.</text>
</comment>